<accession>Q3ZW82</accession>
<evidence type="ECO:0000255" key="1">
    <source>
        <dbReference type="HAMAP-Rule" id="MF_00335"/>
    </source>
</evidence>
<evidence type="ECO:0000255" key="2">
    <source>
        <dbReference type="PROSITE-ProRule" id="PRU01175"/>
    </source>
</evidence>
<evidence type="ECO:0000256" key="3">
    <source>
        <dbReference type="SAM" id="MobiDB-lite"/>
    </source>
</evidence>
<keyword id="KW-1003">Cell membrane</keyword>
<keyword id="KW-0255">Endonuclease</keyword>
<keyword id="KW-0378">Hydrolase</keyword>
<keyword id="KW-0472">Membrane</keyword>
<keyword id="KW-0540">Nuclease</keyword>
<keyword id="KW-0694">RNA-binding</keyword>
<keyword id="KW-0812">Transmembrane</keyword>
<keyword id="KW-1133">Transmembrane helix</keyword>
<dbReference type="EC" id="3.1.-.-" evidence="1"/>
<dbReference type="EMBL" id="AJ965256">
    <property type="protein sequence ID" value="CAI83705.1"/>
    <property type="molecule type" value="Genomic_DNA"/>
</dbReference>
<dbReference type="RefSeq" id="WP_011310043.1">
    <property type="nucleotide sequence ID" value="NC_007356.1"/>
</dbReference>
<dbReference type="SMR" id="Q3ZW82"/>
<dbReference type="KEGG" id="deh:cbdbA1702"/>
<dbReference type="HOGENOM" id="CLU_028328_1_0_0"/>
<dbReference type="Proteomes" id="UP000000433">
    <property type="component" value="Chromosome"/>
</dbReference>
<dbReference type="GO" id="GO:0005886">
    <property type="term" value="C:plasma membrane"/>
    <property type="evidence" value="ECO:0007669"/>
    <property type="project" value="UniProtKB-SubCell"/>
</dbReference>
<dbReference type="GO" id="GO:0003723">
    <property type="term" value="F:RNA binding"/>
    <property type="evidence" value="ECO:0007669"/>
    <property type="project" value="UniProtKB-UniRule"/>
</dbReference>
<dbReference type="GO" id="GO:0004521">
    <property type="term" value="F:RNA endonuclease activity"/>
    <property type="evidence" value="ECO:0007669"/>
    <property type="project" value="UniProtKB-UniRule"/>
</dbReference>
<dbReference type="GO" id="GO:0006402">
    <property type="term" value="P:mRNA catabolic process"/>
    <property type="evidence" value="ECO:0007669"/>
    <property type="project" value="UniProtKB-UniRule"/>
</dbReference>
<dbReference type="CDD" id="cd00077">
    <property type="entry name" value="HDc"/>
    <property type="match status" value="1"/>
</dbReference>
<dbReference type="CDD" id="cd22431">
    <property type="entry name" value="KH-I_RNaseY"/>
    <property type="match status" value="1"/>
</dbReference>
<dbReference type="Gene3D" id="1.10.3210.10">
    <property type="entry name" value="Hypothetical protein af1432"/>
    <property type="match status" value="1"/>
</dbReference>
<dbReference type="Gene3D" id="3.30.1370.10">
    <property type="entry name" value="K Homology domain, type 1"/>
    <property type="match status" value="1"/>
</dbReference>
<dbReference type="HAMAP" id="MF_00335">
    <property type="entry name" value="RNase_Y"/>
    <property type="match status" value="1"/>
</dbReference>
<dbReference type="InterPro" id="IPR003607">
    <property type="entry name" value="HD/PDEase_dom"/>
</dbReference>
<dbReference type="InterPro" id="IPR006674">
    <property type="entry name" value="HD_domain"/>
</dbReference>
<dbReference type="InterPro" id="IPR006675">
    <property type="entry name" value="HDIG_dom"/>
</dbReference>
<dbReference type="InterPro" id="IPR004087">
    <property type="entry name" value="KH_dom"/>
</dbReference>
<dbReference type="InterPro" id="IPR004088">
    <property type="entry name" value="KH_dom_type_1"/>
</dbReference>
<dbReference type="InterPro" id="IPR036612">
    <property type="entry name" value="KH_dom_type_1_sf"/>
</dbReference>
<dbReference type="InterPro" id="IPR017705">
    <property type="entry name" value="Ribonuclease_Y"/>
</dbReference>
<dbReference type="InterPro" id="IPR022711">
    <property type="entry name" value="RNase_Y_N"/>
</dbReference>
<dbReference type="NCBIfam" id="TIGR00277">
    <property type="entry name" value="HDIG"/>
    <property type="match status" value="1"/>
</dbReference>
<dbReference type="NCBIfam" id="TIGR03319">
    <property type="entry name" value="RNase_Y"/>
    <property type="match status" value="1"/>
</dbReference>
<dbReference type="PANTHER" id="PTHR12826">
    <property type="entry name" value="RIBONUCLEASE Y"/>
    <property type="match status" value="1"/>
</dbReference>
<dbReference type="PANTHER" id="PTHR12826:SF15">
    <property type="entry name" value="RIBONUCLEASE Y"/>
    <property type="match status" value="1"/>
</dbReference>
<dbReference type="Pfam" id="PF01966">
    <property type="entry name" value="HD"/>
    <property type="match status" value="1"/>
</dbReference>
<dbReference type="Pfam" id="PF00013">
    <property type="entry name" value="KH_1"/>
    <property type="match status" value="1"/>
</dbReference>
<dbReference type="Pfam" id="PF12072">
    <property type="entry name" value="RNase_Y_N"/>
    <property type="match status" value="1"/>
</dbReference>
<dbReference type="SMART" id="SM00471">
    <property type="entry name" value="HDc"/>
    <property type="match status" value="1"/>
</dbReference>
<dbReference type="SMART" id="SM00322">
    <property type="entry name" value="KH"/>
    <property type="match status" value="1"/>
</dbReference>
<dbReference type="SUPFAM" id="SSF54791">
    <property type="entry name" value="Eukaryotic type KH-domain (KH-domain type I)"/>
    <property type="match status" value="1"/>
</dbReference>
<dbReference type="SUPFAM" id="SSF109604">
    <property type="entry name" value="HD-domain/PDEase-like"/>
    <property type="match status" value="1"/>
</dbReference>
<dbReference type="PROSITE" id="PS51831">
    <property type="entry name" value="HD"/>
    <property type="match status" value="1"/>
</dbReference>
<dbReference type="PROSITE" id="PS50084">
    <property type="entry name" value="KH_TYPE_1"/>
    <property type="match status" value="1"/>
</dbReference>
<name>RNY_DEHMC</name>
<gene>
    <name evidence="1" type="primary">rny</name>
    <name type="ordered locus">cbdbA1702</name>
</gene>
<proteinExistence type="inferred from homology"/>
<feature type="chain" id="PRO_0000344861" description="Ribonuclease Y">
    <location>
        <begin position="1"/>
        <end position="527"/>
    </location>
</feature>
<feature type="transmembrane region" description="Helical" evidence="1">
    <location>
        <begin position="21"/>
        <end position="41"/>
    </location>
</feature>
<feature type="domain" description="KH" evidence="1">
    <location>
        <begin position="217"/>
        <end position="302"/>
    </location>
</feature>
<feature type="domain" description="HD" evidence="2">
    <location>
        <begin position="343"/>
        <end position="436"/>
    </location>
</feature>
<feature type="region of interest" description="Disordered" evidence="3">
    <location>
        <begin position="78"/>
        <end position="97"/>
    </location>
</feature>
<comment type="function">
    <text evidence="1">Endoribonuclease that initiates mRNA decay.</text>
</comment>
<comment type="subcellular location">
    <subcellularLocation>
        <location evidence="1">Cell membrane</location>
        <topology evidence="1">Single-pass membrane protein</topology>
    </subcellularLocation>
</comment>
<comment type="similarity">
    <text evidence="1">Belongs to the RNase Y family.</text>
</comment>
<sequence length="527" mass="59161">MFEFFMETAPATTTGLPLSAILAIFFSFIIGIVFGGMALFVFRGFIMNRQLRIAQRKATKMLADSKLEAKDVLVEAKREADKTRNSAETELKERRSELAKQENRVIQKTEALDRKLENLEQREQSLTNREKSIDETQSQIEEIRENELKRLEEVANMTTEQAKTSLLEMLEGEMQQETSRRLREWEIKIKAEADEKAREVVSQAIQRCASDVVTETTTNVVPLPSDEMKGRLIGREGRNIRALEQATGVDLIIDDTPEAVTISSFDPVRREVARQALSKLIIDGRIHPARIEEVVTKAKEEVEAAMIASGEQAAYQAGVHGLRPEIIKVMGRLKYRTSYGQNVLQHSIEVAQMSGMIGSELGVNVTLARRAGFLHDIGKAVDRDVEGTHTQIGADMVKQWEKSPEVIKGVAEHHFDTPTVSIWGFIVSAADAISSARPGARRESLENYIKRLKALEEIADSFKGVEKSFAIQAGREVRIMVKPDEIDDLGAMRLARDIVKRIEDGLEYPGQIKVTVIRETRSVDFAK</sequence>
<organism>
    <name type="scientific">Dehalococcoides mccartyi (strain CBDB1)</name>
    <dbReference type="NCBI Taxonomy" id="255470"/>
    <lineage>
        <taxon>Bacteria</taxon>
        <taxon>Bacillati</taxon>
        <taxon>Chloroflexota</taxon>
        <taxon>Dehalococcoidia</taxon>
        <taxon>Dehalococcoidales</taxon>
        <taxon>Dehalococcoidaceae</taxon>
        <taxon>Dehalococcoides</taxon>
    </lineage>
</organism>
<protein>
    <recommendedName>
        <fullName evidence="1">Ribonuclease Y</fullName>
        <shortName evidence="1">RNase Y</shortName>
        <ecNumber evidence="1">3.1.-.-</ecNumber>
    </recommendedName>
</protein>
<reference key="1">
    <citation type="journal article" date="2005" name="Nat. Biotechnol.">
        <title>Genome sequence of the chlorinated compound-respiring bacterium Dehalococcoides species strain CBDB1.</title>
        <authorList>
            <person name="Kube M."/>
            <person name="Beck A."/>
            <person name="Zinder S.H."/>
            <person name="Kuhl H."/>
            <person name="Reinhardt R."/>
            <person name="Adrian L."/>
        </authorList>
    </citation>
    <scope>NUCLEOTIDE SEQUENCE [LARGE SCALE GENOMIC DNA]</scope>
    <source>
        <strain>CBDB1</strain>
    </source>
</reference>